<organism>
    <name type="scientific">Geobacter sp. (strain M21)</name>
    <dbReference type="NCBI Taxonomy" id="443144"/>
    <lineage>
        <taxon>Bacteria</taxon>
        <taxon>Pseudomonadati</taxon>
        <taxon>Thermodesulfobacteriota</taxon>
        <taxon>Desulfuromonadia</taxon>
        <taxon>Geobacterales</taxon>
        <taxon>Geobacteraceae</taxon>
        <taxon>Geobacter</taxon>
    </lineage>
</organism>
<dbReference type="EMBL" id="CP001661">
    <property type="protein sequence ID" value="ACT19916.1"/>
    <property type="molecule type" value="Genomic_DNA"/>
</dbReference>
<dbReference type="SMR" id="C6E8C5"/>
<dbReference type="STRING" id="443144.GM21_3899"/>
<dbReference type="KEGG" id="gem:GM21_3899"/>
<dbReference type="eggNOG" id="COG0218">
    <property type="taxonomic scope" value="Bacteria"/>
</dbReference>
<dbReference type="HOGENOM" id="CLU_033732_3_0_7"/>
<dbReference type="OrthoDB" id="9804921at2"/>
<dbReference type="GO" id="GO:0005829">
    <property type="term" value="C:cytosol"/>
    <property type="evidence" value="ECO:0007669"/>
    <property type="project" value="TreeGrafter"/>
</dbReference>
<dbReference type="GO" id="GO:0005525">
    <property type="term" value="F:GTP binding"/>
    <property type="evidence" value="ECO:0007669"/>
    <property type="project" value="UniProtKB-UniRule"/>
</dbReference>
<dbReference type="GO" id="GO:0046872">
    <property type="term" value="F:metal ion binding"/>
    <property type="evidence" value="ECO:0007669"/>
    <property type="project" value="UniProtKB-KW"/>
</dbReference>
<dbReference type="GO" id="GO:0000917">
    <property type="term" value="P:division septum assembly"/>
    <property type="evidence" value="ECO:0007669"/>
    <property type="project" value="UniProtKB-KW"/>
</dbReference>
<dbReference type="CDD" id="cd01876">
    <property type="entry name" value="YihA_EngB"/>
    <property type="match status" value="1"/>
</dbReference>
<dbReference type="FunFam" id="3.40.50.300:FF:000098">
    <property type="entry name" value="Probable GTP-binding protein EngB"/>
    <property type="match status" value="1"/>
</dbReference>
<dbReference type="Gene3D" id="3.40.50.300">
    <property type="entry name" value="P-loop containing nucleotide triphosphate hydrolases"/>
    <property type="match status" value="1"/>
</dbReference>
<dbReference type="HAMAP" id="MF_00321">
    <property type="entry name" value="GTPase_EngB"/>
    <property type="match status" value="1"/>
</dbReference>
<dbReference type="InterPro" id="IPR030393">
    <property type="entry name" value="G_ENGB_dom"/>
</dbReference>
<dbReference type="InterPro" id="IPR006073">
    <property type="entry name" value="GTP-bd"/>
</dbReference>
<dbReference type="InterPro" id="IPR019987">
    <property type="entry name" value="GTP-bd_ribosome_bio_YsxC"/>
</dbReference>
<dbReference type="InterPro" id="IPR027417">
    <property type="entry name" value="P-loop_NTPase"/>
</dbReference>
<dbReference type="NCBIfam" id="TIGR03598">
    <property type="entry name" value="GTPase_YsxC"/>
    <property type="match status" value="1"/>
</dbReference>
<dbReference type="PANTHER" id="PTHR11649:SF13">
    <property type="entry name" value="ENGB-TYPE G DOMAIN-CONTAINING PROTEIN"/>
    <property type="match status" value="1"/>
</dbReference>
<dbReference type="PANTHER" id="PTHR11649">
    <property type="entry name" value="MSS1/TRME-RELATED GTP-BINDING PROTEIN"/>
    <property type="match status" value="1"/>
</dbReference>
<dbReference type="Pfam" id="PF01926">
    <property type="entry name" value="MMR_HSR1"/>
    <property type="match status" value="1"/>
</dbReference>
<dbReference type="SUPFAM" id="SSF52540">
    <property type="entry name" value="P-loop containing nucleoside triphosphate hydrolases"/>
    <property type="match status" value="1"/>
</dbReference>
<dbReference type="PROSITE" id="PS51706">
    <property type="entry name" value="G_ENGB"/>
    <property type="match status" value="1"/>
</dbReference>
<evidence type="ECO:0000255" key="1">
    <source>
        <dbReference type="HAMAP-Rule" id="MF_00321"/>
    </source>
</evidence>
<evidence type="ECO:0000256" key="2">
    <source>
        <dbReference type="SAM" id="MobiDB-lite"/>
    </source>
</evidence>
<feature type="chain" id="PRO_1000205129" description="Probable GTP-binding protein EngB">
    <location>
        <begin position="1"/>
        <end position="214"/>
    </location>
</feature>
<feature type="domain" description="EngB-type G" evidence="1">
    <location>
        <begin position="22"/>
        <end position="194"/>
    </location>
</feature>
<feature type="region of interest" description="Disordered" evidence="2">
    <location>
        <begin position="195"/>
        <end position="214"/>
    </location>
</feature>
<feature type="compositionally biased region" description="Pro residues" evidence="2">
    <location>
        <begin position="203"/>
        <end position="214"/>
    </location>
</feature>
<feature type="binding site" evidence="1">
    <location>
        <begin position="30"/>
        <end position="37"/>
    </location>
    <ligand>
        <name>GTP</name>
        <dbReference type="ChEBI" id="CHEBI:37565"/>
    </ligand>
</feature>
<feature type="binding site" evidence="1">
    <location>
        <position position="37"/>
    </location>
    <ligand>
        <name>Mg(2+)</name>
        <dbReference type="ChEBI" id="CHEBI:18420"/>
    </ligand>
</feature>
<feature type="binding site" evidence="1">
    <location>
        <begin position="57"/>
        <end position="61"/>
    </location>
    <ligand>
        <name>GTP</name>
        <dbReference type="ChEBI" id="CHEBI:37565"/>
    </ligand>
</feature>
<feature type="binding site" evidence="1">
    <location>
        <position position="59"/>
    </location>
    <ligand>
        <name>Mg(2+)</name>
        <dbReference type="ChEBI" id="CHEBI:18420"/>
    </ligand>
</feature>
<feature type="binding site" evidence="1">
    <location>
        <begin position="75"/>
        <end position="78"/>
    </location>
    <ligand>
        <name>GTP</name>
        <dbReference type="ChEBI" id="CHEBI:37565"/>
    </ligand>
</feature>
<feature type="binding site" evidence="1">
    <location>
        <begin position="142"/>
        <end position="145"/>
    </location>
    <ligand>
        <name>GTP</name>
        <dbReference type="ChEBI" id="CHEBI:37565"/>
    </ligand>
</feature>
<feature type="binding site" evidence="1">
    <location>
        <begin position="173"/>
        <end position="175"/>
    </location>
    <ligand>
        <name>GTP</name>
        <dbReference type="ChEBI" id="CHEBI:37565"/>
    </ligand>
</feature>
<comment type="function">
    <text evidence="1">Necessary for normal cell division and for the maintenance of normal septation.</text>
</comment>
<comment type="cofactor">
    <cofactor evidence="1">
        <name>Mg(2+)</name>
        <dbReference type="ChEBI" id="CHEBI:18420"/>
    </cofactor>
</comment>
<comment type="similarity">
    <text evidence="1">Belongs to the TRAFAC class TrmE-Era-EngA-EngB-Septin-like GTPase superfamily. EngB GTPase family.</text>
</comment>
<gene>
    <name evidence="1" type="primary">engB</name>
    <name type="ordered locus">GM21_3899</name>
</gene>
<protein>
    <recommendedName>
        <fullName evidence="1">Probable GTP-binding protein EngB</fullName>
    </recommendedName>
</protein>
<sequence length="214" mass="24169">MIVKNTEFIKSATRPAHYPEGHLPEIAFAGRSNVGKSSLVNVLVNRKNLVRTSSTPGRTQLINFFQVNDDFMLVDLPGYGYAKVPLAVKKEWRPMMETYLSKRRNLRGVVLILDIRRTPTEEDLQMLTWLRAFSVPPVIVITKCDKVSKNERARQSAIIMEKMHLKKEELNYFSALSREGKDAVWARIDALLEPTAAETPGIPEEPAPPGPVND</sequence>
<keyword id="KW-0131">Cell cycle</keyword>
<keyword id="KW-0132">Cell division</keyword>
<keyword id="KW-0342">GTP-binding</keyword>
<keyword id="KW-0460">Magnesium</keyword>
<keyword id="KW-0479">Metal-binding</keyword>
<keyword id="KW-0547">Nucleotide-binding</keyword>
<keyword id="KW-0717">Septation</keyword>
<name>ENGB_GEOSM</name>
<accession>C6E8C5</accession>
<reference key="1">
    <citation type="submission" date="2009-07" db="EMBL/GenBank/DDBJ databases">
        <title>Complete sequence of Geobacter sp. M21.</title>
        <authorList>
            <consortium name="US DOE Joint Genome Institute"/>
            <person name="Lucas S."/>
            <person name="Copeland A."/>
            <person name="Lapidus A."/>
            <person name="Glavina del Rio T."/>
            <person name="Dalin E."/>
            <person name="Tice H."/>
            <person name="Bruce D."/>
            <person name="Goodwin L."/>
            <person name="Pitluck S."/>
            <person name="Saunders E."/>
            <person name="Brettin T."/>
            <person name="Detter J.C."/>
            <person name="Han C."/>
            <person name="Larimer F."/>
            <person name="Land M."/>
            <person name="Hauser L."/>
            <person name="Kyrpides N."/>
            <person name="Ovchinnikova G."/>
            <person name="Lovley D."/>
        </authorList>
    </citation>
    <scope>NUCLEOTIDE SEQUENCE [LARGE SCALE GENOMIC DNA]</scope>
    <source>
        <strain>M21</strain>
    </source>
</reference>
<proteinExistence type="inferred from homology"/>